<reference key="1">
    <citation type="journal article" date="2001" name="Mol. Phylogenet. Evol.">
        <title>Molecular systematics of bats of the genus Myotis (Vespertilionidae) suggests deterministic ecomorphological convergences.</title>
        <authorList>
            <person name="Ruedi M."/>
            <person name="Mayer F."/>
        </authorList>
    </citation>
    <scope>NUCLEOTIDE SEQUENCE [GENOMIC DNA]</scope>
    <source>
        <strain>Isolate ER 97</strain>
    </source>
</reference>
<evidence type="ECO:0000250" key="1"/>
<evidence type="ECO:0000250" key="2">
    <source>
        <dbReference type="UniProtKB" id="P00157"/>
    </source>
</evidence>
<evidence type="ECO:0000255" key="3">
    <source>
        <dbReference type="PROSITE-ProRule" id="PRU00967"/>
    </source>
</evidence>
<evidence type="ECO:0000255" key="4">
    <source>
        <dbReference type="PROSITE-ProRule" id="PRU00968"/>
    </source>
</evidence>
<keyword id="KW-0249">Electron transport</keyword>
<keyword id="KW-0349">Heme</keyword>
<keyword id="KW-0408">Iron</keyword>
<keyword id="KW-0472">Membrane</keyword>
<keyword id="KW-0479">Metal-binding</keyword>
<keyword id="KW-0496">Mitochondrion</keyword>
<keyword id="KW-0999">Mitochondrion inner membrane</keyword>
<keyword id="KW-0679">Respiratory chain</keyword>
<keyword id="KW-0812">Transmembrane</keyword>
<keyword id="KW-1133">Transmembrane helix</keyword>
<keyword id="KW-0813">Transport</keyword>
<keyword id="KW-0830">Ubiquinone</keyword>
<protein>
    <recommendedName>
        <fullName>Cytochrome b</fullName>
    </recommendedName>
    <alternativeName>
        <fullName>Complex III subunit 3</fullName>
    </alternativeName>
    <alternativeName>
        <fullName>Complex III subunit III</fullName>
    </alternativeName>
    <alternativeName>
        <fullName>Cytochrome b-c1 complex subunit 3</fullName>
    </alternativeName>
    <alternativeName>
        <fullName>Ubiquinol-cytochrome-c reductase complex cytochrome b subunit</fullName>
    </alternativeName>
</protein>
<organism>
    <name type="scientific">Myotis brandtii</name>
    <name type="common">Brandt's bat</name>
    <dbReference type="NCBI Taxonomy" id="109478"/>
    <lineage>
        <taxon>Eukaryota</taxon>
        <taxon>Metazoa</taxon>
        <taxon>Chordata</taxon>
        <taxon>Craniata</taxon>
        <taxon>Vertebrata</taxon>
        <taxon>Euteleostomi</taxon>
        <taxon>Mammalia</taxon>
        <taxon>Eutheria</taxon>
        <taxon>Laurasiatheria</taxon>
        <taxon>Chiroptera</taxon>
        <taxon>Yangochiroptera</taxon>
        <taxon>Vespertilionidae</taxon>
        <taxon>Myotis</taxon>
    </lineage>
</organism>
<comment type="function">
    <text evidence="2">Component of the ubiquinol-cytochrome c reductase complex (complex III or cytochrome b-c1 complex) that is part of the mitochondrial respiratory chain. The b-c1 complex mediates electron transfer from ubiquinol to cytochrome c. Contributes to the generation of a proton gradient across the mitochondrial membrane that is then used for ATP synthesis.</text>
</comment>
<comment type="cofactor">
    <cofactor evidence="2">
        <name>heme b</name>
        <dbReference type="ChEBI" id="CHEBI:60344"/>
    </cofactor>
    <text evidence="2">Binds 2 heme b groups non-covalently.</text>
</comment>
<comment type="subunit">
    <text evidence="2">The cytochrome bc1 complex contains 11 subunits: 3 respiratory subunits (MT-CYB, CYC1 and UQCRFS1), 2 core proteins (UQCRC1 and UQCRC2) and 6 low-molecular weight proteins (UQCRH/QCR6, UQCRB/QCR7, UQCRQ/QCR8, UQCR10/QCR9, UQCR11/QCR10 and a cleavage product of UQCRFS1). This cytochrome bc1 complex then forms a dimer.</text>
</comment>
<comment type="subcellular location">
    <subcellularLocation>
        <location evidence="2">Mitochondrion inner membrane</location>
        <topology evidence="2">Multi-pass membrane protein</topology>
    </subcellularLocation>
</comment>
<comment type="miscellaneous">
    <text evidence="1">Heme 1 (or BL or b562) is low-potential and absorbs at about 562 nm, and heme 2 (or BH or b566) is high-potential and absorbs at about 566 nm.</text>
</comment>
<comment type="similarity">
    <text evidence="3 4">Belongs to the cytochrome b family.</text>
</comment>
<comment type="caution">
    <text evidence="2">The full-length protein contains only eight transmembrane helices, not nine as predicted by bioinformatics tools.</text>
</comment>
<sequence>MTNIRKSHPLMKIINSSFIDLPAPSNISSWWNFGSLLGICLALQILTGLFLAMHYTSDTTTAFNSVTHICRDVNYGWVLRYLHANGASMFFICLYLHVGRGLYYGSYMYTETWNIGVILLFAVMATAFMGYVLPWGQMSFWGATVITNLLSAIPYIGTDLVEWIWGGFSVDKATLTRFFAFHFLLPFIIAAMVMVHLLFLHETGSNNPTGIPSNADMIPFHPYYTIKDILGLLLMITVLLMLVLFSPDLLGDPDNYTPANPLNTPPHIKPEWYFLFAYAILRSIPNKLGGVLALVLSILILIIIPLLHTSKQRSMTFRPLSQCLFWLLTADLFTLTWIGGQPVEHPYVIIGQLASILYFSIIIILMPLISLMENHLLKW</sequence>
<feature type="chain" id="PRO_0000061232" description="Cytochrome b">
    <location>
        <begin position="1"/>
        <end position="379"/>
    </location>
</feature>
<feature type="transmembrane region" description="Helical" evidence="2">
    <location>
        <begin position="33"/>
        <end position="53"/>
    </location>
</feature>
<feature type="transmembrane region" description="Helical" evidence="2">
    <location>
        <begin position="77"/>
        <end position="98"/>
    </location>
</feature>
<feature type="transmembrane region" description="Helical" evidence="2">
    <location>
        <begin position="113"/>
        <end position="133"/>
    </location>
</feature>
<feature type="transmembrane region" description="Helical" evidence="2">
    <location>
        <begin position="178"/>
        <end position="198"/>
    </location>
</feature>
<feature type="transmembrane region" description="Helical" evidence="2">
    <location>
        <begin position="226"/>
        <end position="246"/>
    </location>
</feature>
<feature type="transmembrane region" description="Helical" evidence="2">
    <location>
        <begin position="288"/>
        <end position="308"/>
    </location>
</feature>
<feature type="transmembrane region" description="Helical" evidence="2">
    <location>
        <begin position="320"/>
        <end position="340"/>
    </location>
</feature>
<feature type="transmembrane region" description="Helical" evidence="2">
    <location>
        <begin position="347"/>
        <end position="367"/>
    </location>
</feature>
<feature type="binding site" description="axial binding residue" evidence="2">
    <location>
        <position position="83"/>
    </location>
    <ligand>
        <name>heme b</name>
        <dbReference type="ChEBI" id="CHEBI:60344"/>
        <label>b562</label>
    </ligand>
    <ligandPart>
        <name>Fe</name>
        <dbReference type="ChEBI" id="CHEBI:18248"/>
    </ligandPart>
</feature>
<feature type="binding site" description="axial binding residue" evidence="2">
    <location>
        <position position="97"/>
    </location>
    <ligand>
        <name>heme b</name>
        <dbReference type="ChEBI" id="CHEBI:60344"/>
        <label>b566</label>
    </ligand>
    <ligandPart>
        <name>Fe</name>
        <dbReference type="ChEBI" id="CHEBI:18248"/>
    </ligandPart>
</feature>
<feature type="binding site" description="axial binding residue" evidence="2">
    <location>
        <position position="182"/>
    </location>
    <ligand>
        <name>heme b</name>
        <dbReference type="ChEBI" id="CHEBI:60344"/>
        <label>b562</label>
    </ligand>
    <ligandPart>
        <name>Fe</name>
        <dbReference type="ChEBI" id="CHEBI:18248"/>
    </ligandPart>
</feature>
<feature type="binding site" description="axial binding residue" evidence="2">
    <location>
        <position position="196"/>
    </location>
    <ligand>
        <name>heme b</name>
        <dbReference type="ChEBI" id="CHEBI:60344"/>
        <label>b566</label>
    </ligand>
    <ligandPart>
        <name>Fe</name>
        <dbReference type="ChEBI" id="CHEBI:18248"/>
    </ligandPart>
</feature>
<feature type="binding site" evidence="2">
    <location>
        <position position="201"/>
    </location>
    <ligand>
        <name>a ubiquinone</name>
        <dbReference type="ChEBI" id="CHEBI:16389"/>
    </ligand>
</feature>
<accession>Q957B8</accession>
<gene>
    <name type="primary">MT-CYB</name>
    <name type="synonym">COB</name>
    <name type="synonym">CYTB</name>
    <name type="synonym">MTCYB</name>
</gene>
<dbReference type="EMBL" id="AF376844">
    <property type="protein sequence ID" value="AAK57663.1"/>
    <property type="molecule type" value="Genomic_DNA"/>
</dbReference>
<dbReference type="RefSeq" id="YP_009092855.1">
    <property type="nucleotide sequence ID" value="NC_025308.1"/>
</dbReference>
<dbReference type="SMR" id="Q957B8"/>
<dbReference type="GeneID" id="20964704"/>
<dbReference type="KEGG" id="myb:20964704"/>
<dbReference type="CTD" id="4519"/>
<dbReference type="GO" id="GO:0005743">
    <property type="term" value="C:mitochondrial inner membrane"/>
    <property type="evidence" value="ECO:0007669"/>
    <property type="project" value="UniProtKB-SubCell"/>
</dbReference>
<dbReference type="GO" id="GO:0045275">
    <property type="term" value="C:respiratory chain complex III"/>
    <property type="evidence" value="ECO:0007669"/>
    <property type="project" value="InterPro"/>
</dbReference>
<dbReference type="GO" id="GO:0046872">
    <property type="term" value="F:metal ion binding"/>
    <property type="evidence" value="ECO:0007669"/>
    <property type="project" value="UniProtKB-KW"/>
</dbReference>
<dbReference type="GO" id="GO:0008121">
    <property type="term" value="F:ubiquinol-cytochrome-c reductase activity"/>
    <property type="evidence" value="ECO:0007669"/>
    <property type="project" value="InterPro"/>
</dbReference>
<dbReference type="GO" id="GO:0006122">
    <property type="term" value="P:mitochondrial electron transport, ubiquinol to cytochrome c"/>
    <property type="evidence" value="ECO:0007669"/>
    <property type="project" value="TreeGrafter"/>
</dbReference>
<dbReference type="CDD" id="cd00290">
    <property type="entry name" value="cytochrome_b_C"/>
    <property type="match status" value="1"/>
</dbReference>
<dbReference type="CDD" id="cd00284">
    <property type="entry name" value="Cytochrome_b_N"/>
    <property type="match status" value="1"/>
</dbReference>
<dbReference type="FunFam" id="1.20.810.10:FF:000002">
    <property type="entry name" value="Cytochrome b"/>
    <property type="match status" value="1"/>
</dbReference>
<dbReference type="Gene3D" id="1.20.810.10">
    <property type="entry name" value="Cytochrome Bc1 Complex, Chain C"/>
    <property type="match status" value="1"/>
</dbReference>
<dbReference type="InterPro" id="IPR005798">
    <property type="entry name" value="Cyt_b/b6_C"/>
</dbReference>
<dbReference type="InterPro" id="IPR036150">
    <property type="entry name" value="Cyt_b/b6_C_sf"/>
</dbReference>
<dbReference type="InterPro" id="IPR005797">
    <property type="entry name" value="Cyt_b/b6_N"/>
</dbReference>
<dbReference type="InterPro" id="IPR027387">
    <property type="entry name" value="Cytb/b6-like_sf"/>
</dbReference>
<dbReference type="InterPro" id="IPR030689">
    <property type="entry name" value="Cytochrome_b"/>
</dbReference>
<dbReference type="InterPro" id="IPR048260">
    <property type="entry name" value="Cytochrome_b_C_euk/bac"/>
</dbReference>
<dbReference type="InterPro" id="IPR048259">
    <property type="entry name" value="Cytochrome_b_N_euk/bac"/>
</dbReference>
<dbReference type="InterPro" id="IPR016174">
    <property type="entry name" value="Di-haem_cyt_TM"/>
</dbReference>
<dbReference type="PANTHER" id="PTHR19271">
    <property type="entry name" value="CYTOCHROME B"/>
    <property type="match status" value="1"/>
</dbReference>
<dbReference type="PANTHER" id="PTHR19271:SF16">
    <property type="entry name" value="CYTOCHROME B"/>
    <property type="match status" value="1"/>
</dbReference>
<dbReference type="Pfam" id="PF00032">
    <property type="entry name" value="Cytochrom_B_C"/>
    <property type="match status" value="1"/>
</dbReference>
<dbReference type="Pfam" id="PF00033">
    <property type="entry name" value="Cytochrome_B"/>
    <property type="match status" value="1"/>
</dbReference>
<dbReference type="PIRSF" id="PIRSF038885">
    <property type="entry name" value="COB"/>
    <property type="match status" value="1"/>
</dbReference>
<dbReference type="SUPFAM" id="SSF81648">
    <property type="entry name" value="a domain/subunit of cytochrome bc1 complex (Ubiquinol-cytochrome c reductase)"/>
    <property type="match status" value="1"/>
</dbReference>
<dbReference type="SUPFAM" id="SSF81342">
    <property type="entry name" value="Transmembrane di-heme cytochromes"/>
    <property type="match status" value="1"/>
</dbReference>
<dbReference type="PROSITE" id="PS51003">
    <property type="entry name" value="CYTB_CTER"/>
    <property type="match status" value="1"/>
</dbReference>
<dbReference type="PROSITE" id="PS51002">
    <property type="entry name" value="CYTB_NTER"/>
    <property type="match status" value="1"/>
</dbReference>
<name>CYB_MYOBR</name>
<geneLocation type="mitochondrion"/>
<proteinExistence type="inferred from homology"/>